<comment type="function">
    <text evidence="1">The glycine cleavage system catalyzes the degradation of glycine.</text>
</comment>
<comment type="catalytic activity">
    <reaction evidence="1">
        <text>N(6)-[(R)-S(8)-aminomethyldihydrolipoyl]-L-lysyl-[protein] + (6S)-5,6,7,8-tetrahydrofolate = N(6)-[(R)-dihydrolipoyl]-L-lysyl-[protein] + (6R)-5,10-methylene-5,6,7,8-tetrahydrofolate + NH4(+)</text>
        <dbReference type="Rhea" id="RHEA:16945"/>
        <dbReference type="Rhea" id="RHEA-COMP:10475"/>
        <dbReference type="Rhea" id="RHEA-COMP:10492"/>
        <dbReference type="ChEBI" id="CHEBI:15636"/>
        <dbReference type="ChEBI" id="CHEBI:28938"/>
        <dbReference type="ChEBI" id="CHEBI:57453"/>
        <dbReference type="ChEBI" id="CHEBI:83100"/>
        <dbReference type="ChEBI" id="CHEBI:83143"/>
        <dbReference type="EC" id="2.1.2.10"/>
    </reaction>
</comment>
<comment type="subunit">
    <text evidence="1">The glycine cleavage system is composed of four proteins: P, T, L and H.</text>
</comment>
<comment type="similarity">
    <text evidence="1">Belongs to the GcvT family.</text>
</comment>
<comment type="sequence caution" evidence="2">
    <conflict type="erroneous initiation">
        <sequence resource="EMBL-CDS" id="AAU26225"/>
    </conflict>
</comment>
<sequence length="360" mass="39514">MTAKTPLHTTHLACGAKMVDFHGWDMPLHYGSQLNEHHAVRNDAGMFDVSHMTIVDILGAGGRQFLRKLLTNDVDQITHNGKALYSCMCNEHGGIIDDLIVYQRASDNYRVVLNSATRQNDVAWIRAKSEGFAVGLQERRELSMLAVQGPNAIAKTLSILAPAHVDAVSTLTSFECVDVDHWFFARTGYTGEDGLEIIVPNEFVTQLWNDLLHAGVTPCGLGARDTLRLEAGMLLYGQDMDETTTPLESGLAWTVKWEPEDRGFIGMGALVSQKQQGIKRKMVGLTLLDKGIMRHGQKVIIEGCPDGIITSGSYSPTLQQSIALARVPMETGEQVLVDIRGKLIPAKVGKPRFIKQGKPV</sequence>
<evidence type="ECO:0000255" key="1">
    <source>
        <dbReference type="HAMAP-Rule" id="MF_00259"/>
    </source>
</evidence>
<evidence type="ECO:0000305" key="2"/>
<accession>Q5ZZ93</accession>
<dbReference type="EC" id="2.1.2.10" evidence="1"/>
<dbReference type="EMBL" id="AE017354">
    <property type="protein sequence ID" value="AAU26225.1"/>
    <property type="status" value="ALT_INIT"/>
    <property type="molecule type" value="Genomic_DNA"/>
</dbReference>
<dbReference type="RefSeq" id="WP_010945879.1">
    <property type="nucleotide sequence ID" value="NC_002942.5"/>
</dbReference>
<dbReference type="RefSeq" id="YP_094172.2">
    <property type="nucleotide sequence ID" value="NC_002942.5"/>
</dbReference>
<dbReference type="SMR" id="Q5ZZ93"/>
<dbReference type="STRING" id="272624.lpg0118"/>
<dbReference type="PaxDb" id="272624-lpg0118"/>
<dbReference type="GeneID" id="57034125"/>
<dbReference type="KEGG" id="lpn:lpg0118"/>
<dbReference type="PATRIC" id="fig|272624.6.peg.124"/>
<dbReference type="eggNOG" id="COG0404">
    <property type="taxonomic scope" value="Bacteria"/>
</dbReference>
<dbReference type="HOGENOM" id="CLU_007884_10_2_6"/>
<dbReference type="OrthoDB" id="9774591at2"/>
<dbReference type="Proteomes" id="UP000000609">
    <property type="component" value="Chromosome"/>
</dbReference>
<dbReference type="GO" id="GO:0005829">
    <property type="term" value="C:cytosol"/>
    <property type="evidence" value="ECO:0007669"/>
    <property type="project" value="TreeGrafter"/>
</dbReference>
<dbReference type="GO" id="GO:0005960">
    <property type="term" value="C:glycine cleavage complex"/>
    <property type="evidence" value="ECO:0007669"/>
    <property type="project" value="InterPro"/>
</dbReference>
<dbReference type="GO" id="GO:0004047">
    <property type="term" value="F:aminomethyltransferase activity"/>
    <property type="evidence" value="ECO:0007669"/>
    <property type="project" value="UniProtKB-UniRule"/>
</dbReference>
<dbReference type="GO" id="GO:0008483">
    <property type="term" value="F:transaminase activity"/>
    <property type="evidence" value="ECO:0007669"/>
    <property type="project" value="UniProtKB-KW"/>
</dbReference>
<dbReference type="GO" id="GO:0019464">
    <property type="term" value="P:glycine decarboxylation via glycine cleavage system"/>
    <property type="evidence" value="ECO:0007669"/>
    <property type="project" value="UniProtKB-UniRule"/>
</dbReference>
<dbReference type="FunFam" id="3.30.70.1400:FF:000001">
    <property type="entry name" value="Aminomethyltransferase"/>
    <property type="match status" value="1"/>
</dbReference>
<dbReference type="FunFam" id="4.10.1250.10:FF:000001">
    <property type="entry name" value="Aminomethyltransferase"/>
    <property type="match status" value="1"/>
</dbReference>
<dbReference type="Gene3D" id="2.40.30.110">
    <property type="entry name" value="Aminomethyltransferase beta-barrel domains"/>
    <property type="match status" value="1"/>
</dbReference>
<dbReference type="Gene3D" id="3.30.70.1400">
    <property type="entry name" value="Aminomethyltransferase beta-barrel domains"/>
    <property type="match status" value="1"/>
</dbReference>
<dbReference type="Gene3D" id="4.10.1250.10">
    <property type="entry name" value="Aminomethyltransferase fragment"/>
    <property type="match status" value="1"/>
</dbReference>
<dbReference type="Gene3D" id="3.30.1360.120">
    <property type="entry name" value="Probable tRNA modification gtpase trme, domain 1"/>
    <property type="match status" value="1"/>
</dbReference>
<dbReference type="HAMAP" id="MF_00259">
    <property type="entry name" value="GcvT"/>
    <property type="match status" value="1"/>
</dbReference>
<dbReference type="InterPro" id="IPR006223">
    <property type="entry name" value="GCS_T"/>
</dbReference>
<dbReference type="InterPro" id="IPR022903">
    <property type="entry name" value="GCS_T_bac"/>
</dbReference>
<dbReference type="InterPro" id="IPR013977">
    <property type="entry name" value="GCST_C"/>
</dbReference>
<dbReference type="InterPro" id="IPR006222">
    <property type="entry name" value="GCV_T_N"/>
</dbReference>
<dbReference type="InterPro" id="IPR028896">
    <property type="entry name" value="GcvT/YgfZ/DmdA"/>
</dbReference>
<dbReference type="InterPro" id="IPR029043">
    <property type="entry name" value="GcvT/YgfZ_C"/>
</dbReference>
<dbReference type="InterPro" id="IPR027266">
    <property type="entry name" value="TrmE/GcvT_dom1"/>
</dbReference>
<dbReference type="NCBIfam" id="TIGR00528">
    <property type="entry name" value="gcvT"/>
    <property type="match status" value="1"/>
</dbReference>
<dbReference type="NCBIfam" id="NF001567">
    <property type="entry name" value="PRK00389.1"/>
    <property type="match status" value="1"/>
</dbReference>
<dbReference type="PANTHER" id="PTHR43757">
    <property type="entry name" value="AMINOMETHYLTRANSFERASE"/>
    <property type="match status" value="1"/>
</dbReference>
<dbReference type="PANTHER" id="PTHR43757:SF2">
    <property type="entry name" value="AMINOMETHYLTRANSFERASE, MITOCHONDRIAL"/>
    <property type="match status" value="1"/>
</dbReference>
<dbReference type="Pfam" id="PF01571">
    <property type="entry name" value="GCV_T"/>
    <property type="match status" value="1"/>
</dbReference>
<dbReference type="Pfam" id="PF08669">
    <property type="entry name" value="GCV_T_C"/>
    <property type="match status" value="1"/>
</dbReference>
<dbReference type="PIRSF" id="PIRSF006487">
    <property type="entry name" value="GcvT"/>
    <property type="match status" value="1"/>
</dbReference>
<dbReference type="SUPFAM" id="SSF101790">
    <property type="entry name" value="Aminomethyltransferase beta-barrel domain"/>
    <property type="match status" value="1"/>
</dbReference>
<dbReference type="SUPFAM" id="SSF103025">
    <property type="entry name" value="Folate-binding domain"/>
    <property type="match status" value="1"/>
</dbReference>
<feature type="chain" id="PRO_0000122563" description="Aminomethyltransferase">
    <location>
        <begin position="1"/>
        <end position="360"/>
    </location>
</feature>
<proteinExistence type="inferred from homology"/>
<keyword id="KW-0032">Aminotransferase</keyword>
<keyword id="KW-1185">Reference proteome</keyword>
<keyword id="KW-0808">Transferase</keyword>
<reference key="1">
    <citation type="journal article" date="2004" name="Science">
        <title>The genomic sequence of the accidental pathogen Legionella pneumophila.</title>
        <authorList>
            <person name="Chien M."/>
            <person name="Morozova I."/>
            <person name="Shi S."/>
            <person name="Sheng H."/>
            <person name="Chen J."/>
            <person name="Gomez S.M."/>
            <person name="Asamani G."/>
            <person name="Hill K."/>
            <person name="Nuara J."/>
            <person name="Feder M."/>
            <person name="Rineer J."/>
            <person name="Greenberg J.J."/>
            <person name="Steshenko V."/>
            <person name="Park S.H."/>
            <person name="Zhao B."/>
            <person name="Teplitskaya E."/>
            <person name="Edwards J.R."/>
            <person name="Pampou S."/>
            <person name="Georghiou A."/>
            <person name="Chou I.-C."/>
            <person name="Iannuccilli W."/>
            <person name="Ulz M.E."/>
            <person name="Kim D.H."/>
            <person name="Geringer-Sameth A."/>
            <person name="Goldsberry C."/>
            <person name="Morozov P."/>
            <person name="Fischer S.G."/>
            <person name="Segal G."/>
            <person name="Qu X."/>
            <person name="Rzhetsky A."/>
            <person name="Zhang P."/>
            <person name="Cayanis E."/>
            <person name="De Jong P.J."/>
            <person name="Ju J."/>
            <person name="Kalachikov S."/>
            <person name="Shuman H.A."/>
            <person name="Russo J.J."/>
        </authorList>
    </citation>
    <scope>NUCLEOTIDE SEQUENCE [LARGE SCALE GENOMIC DNA]</scope>
    <source>
        <strain>Philadelphia 1 / ATCC 33152 / DSM 7513</strain>
    </source>
</reference>
<name>GCST_LEGPH</name>
<gene>
    <name evidence="1" type="primary">gcvT</name>
    <name type="synonym">gcvT1</name>
    <name type="ordered locus">lpg0118</name>
</gene>
<organism>
    <name type="scientific">Legionella pneumophila subsp. pneumophila (strain Philadelphia 1 / ATCC 33152 / DSM 7513)</name>
    <dbReference type="NCBI Taxonomy" id="272624"/>
    <lineage>
        <taxon>Bacteria</taxon>
        <taxon>Pseudomonadati</taxon>
        <taxon>Pseudomonadota</taxon>
        <taxon>Gammaproteobacteria</taxon>
        <taxon>Legionellales</taxon>
        <taxon>Legionellaceae</taxon>
        <taxon>Legionella</taxon>
    </lineage>
</organism>
<protein>
    <recommendedName>
        <fullName evidence="1">Aminomethyltransferase</fullName>
        <ecNumber evidence="1">2.1.2.10</ecNumber>
    </recommendedName>
    <alternativeName>
        <fullName evidence="1">Glycine cleavage system T protein</fullName>
    </alternativeName>
</protein>